<dbReference type="EMBL" id="CU329671">
    <property type="protein sequence ID" value="CAB91574.1"/>
    <property type="molecule type" value="Genomic_DNA"/>
</dbReference>
<dbReference type="EMBL" id="AB027821">
    <property type="protein sequence ID" value="BAA87125.1"/>
    <property type="molecule type" value="Genomic_DNA"/>
</dbReference>
<dbReference type="RefSeq" id="NP_595055.1">
    <property type="nucleotide sequence ID" value="NM_001020961.2"/>
</dbReference>
<dbReference type="SMR" id="Q9P5N0"/>
<dbReference type="BioGRID" id="277453">
    <property type="interactions" value="6"/>
</dbReference>
<dbReference type="FunCoup" id="Q9P5N0">
    <property type="interactions" value="144"/>
</dbReference>
<dbReference type="STRING" id="284812.Q9P5N0"/>
<dbReference type="TCDB" id="3.A.1.208.28">
    <property type="family name" value="the atp-binding cassette (abc) superfamily"/>
</dbReference>
<dbReference type="iPTMnet" id="Q9P5N0"/>
<dbReference type="PaxDb" id="4896-SPBC359.05.1"/>
<dbReference type="EnsemblFungi" id="SPBC359.05.1">
    <property type="protein sequence ID" value="SPBC359.05.1:pep"/>
    <property type="gene ID" value="SPBC359.05"/>
</dbReference>
<dbReference type="GeneID" id="2540937"/>
<dbReference type="KEGG" id="spo:2540937"/>
<dbReference type="PomBase" id="SPBC359.05">
    <property type="gene designation" value="abc3"/>
</dbReference>
<dbReference type="VEuPathDB" id="FungiDB:SPBC359.05"/>
<dbReference type="eggNOG" id="KOG0054">
    <property type="taxonomic scope" value="Eukaryota"/>
</dbReference>
<dbReference type="HOGENOM" id="CLU_000604_27_3_1"/>
<dbReference type="InParanoid" id="Q9P5N0"/>
<dbReference type="OMA" id="SIWISKW"/>
<dbReference type="PhylomeDB" id="Q9P5N0"/>
<dbReference type="Reactome" id="R-SPO-159418">
    <property type="pathway name" value="Recycling of bile acids and salts"/>
</dbReference>
<dbReference type="Reactome" id="R-SPO-1660661">
    <property type="pathway name" value="Sphingolipid de novo biosynthesis"/>
</dbReference>
<dbReference type="Reactome" id="R-SPO-189483">
    <property type="pathway name" value="Heme degradation"/>
</dbReference>
<dbReference type="Reactome" id="R-SPO-2142691">
    <property type="pathway name" value="Synthesis of Leukotrienes (LT) and Eoxins (EX)"/>
</dbReference>
<dbReference type="Reactome" id="R-SPO-382556">
    <property type="pathway name" value="ABC-family proteins mediated transport"/>
</dbReference>
<dbReference type="Reactome" id="R-SPO-9707564">
    <property type="pathway name" value="Cytoprotection by HMOX1"/>
</dbReference>
<dbReference type="Reactome" id="R-SPO-9749641">
    <property type="pathway name" value="Aspirin ADME"/>
</dbReference>
<dbReference type="Reactome" id="R-SPO-9753281">
    <property type="pathway name" value="Paracetamol ADME"/>
</dbReference>
<dbReference type="Reactome" id="R-SPO-9754706">
    <property type="pathway name" value="Atorvastatin ADME"/>
</dbReference>
<dbReference type="Reactome" id="R-SPO-9758890">
    <property type="pathway name" value="Transport of RCbl within the body"/>
</dbReference>
<dbReference type="PRO" id="PR:Q9P5N0"/>
<dbReference type="Proteomes" id="UP000002485">
    <property type="component" value="Chromosome II"/>
</dbReference>
<dbReference type="GO" id="GO:0000324">
    <property type="term" value="C:fungal-type vacuole"/>
    <property type="evidence" value="ECO:0000314"/>
    <property type="project" value="PomBase"/>
</dbReference>
<dbReference type="GO" id="GO:0000329">
    <property type="term" value="C:fungal-type vacuole membrane"/>
    <property type="evidence" value="ECO:0000314"/>
    <property type="project" value="PomBase"/>
</dbReference>
<dbReference type="GO" id="GO:0016020">
    <property type="term" value="C:membrane"/>
    <property type="evidence" value="ECO:0000314"/>
    <property type="project" value="PomBase"/>
</dbReference>
<dbReference type="GO" id="GO:0015439">
    <property type="term" value="F:ABC-type heme transporter activity"/>
    <property type="evidence" value="ECO:0000315"/>
    <property type="project" value="PomBase"/>
</dbReference>
<dbReference type="GO" id="GO:0005524">
    <property type="term" value="F:ATP binding"/>
    <property type="evidence" value="ECO:0007669"/>
    <property type="project" value="UniProtKB-KW"/>
</dbReference>
<dbReference type="GO" id="GO:0016887">
    <property type="term" value="F:ATP hydrolysis activity"/>
    <property type="evidence" value="ECO:0007669"/>
    <property type="project" value="InterPro"/>
</dbReference>
<dbReference type="GO" id="GO:0042626">
    <property type="term" value="F:ATPase-coupled transmembrane transporter activity"/>
    <property type="evidence" value="ECO:0000318"/>
    <property type="project" value="GO_Central"/>
</dbReference>
<dbReference type="GO" id="GO:0020037">
    <property type="term" value="F:heme binding"/>
    <property type="evidence" value="ECO:0000314"/>
    <property type="project" value="PomBase"/>
</dbReference>
<dbReference type="GO" id="GO:0046872">
    <property type="term" value="F:metal ion binding"/>
    <property type="evidence" value="ECO:0007669"/>
    <property type="project" value="UniProtKB-KW"/>
</dbReference>
<dbReference type="GO" id="GO:0140357">
    <property type="term" value="P:heme export from vacuole to cytoplasm"/>
    <property type="evidence" value="ECO:0000315"/>
    <property type="project" value="PomBase"/>
</dbReference>
<dbReference type="GO" id="GO:0055085">
    <property type="term" value="P:transmembrane transport"/>
    <property type="evidence" value="ECO:0000318"/>
    <property type="project" value="GO_Central"/>
</dbReference>
<dbReference type="CDD" id="cd18580">
    <property type="entry name" value="ABC_6TM_ABCC_D2"/>
    <property type="match status" value="1"/>
</dbReference>
<dbReference type="CDD" id="cd18595">
    <property type="entry name" value="ABC_6TM_MRP1_2_3_6_D1_like"/>
    <property type="match status" value="1"/>
</dbReference>
<dbReference type="CDD" id="cd03250">
    <property type="entry name" value="ABCC_MRP_domain1"/>
    <property type="match status" value="1"/>
</dbReference>
<dbReference type="CDD" id="cd03244">
    <property type="entry name" value="ABCC_MRP_domain2"/>
    <property type="match status" value="1"/>
</dbReference>
<dbReference type="FunFam" id="3.40.50.300:FF:000565">
    <property type="entry name" value="ABC bile acid transporter"/>
    <property type="match status" value="1"/>
</dbReference>
<dbReference type="FunFam" id="1.20.1560.10:FF:000020">
    <property type="entry name" value="ABC metal ion transporter"/>
    <property type="match status" value="1"/>
</dbReference>
<dbReference type="FunFam" id="1.20.1560.10:FF:000001">
    <property type="entry name" value="ATP-binding cassette subfamily C member 1"/>
    <property type="match status" value="1"/>
</dbReference>
<dbReference type="FunFam" id="3.40.50.300:FF:000997">
    <property type="entry name" value="Multidrug resistance-associated protein 1"/>
    <property type="match status" value="1"/>
</dbReference>
<dbReference type="Gene3D" id="1.20.1560.10">
    <property type="entry name" value="ABC transporter type 1, transmembrane domain"/>
    <property type="match status" value="2"/>
</dbReference>
<dbReference type="Gene3D" id="3.40.50.300">
    <property type="entry name" value="P-loop containing nucleotide triphosphate hydrolases"/>
    <property type="match status" value="2"/>
</dbReference>
<dbReference type="InterPro" id="IPR003593">
    <property type="entry name" value="AAA+_ATPase"/>
</dbReference>
<dbReference type="InterPro" id="IPR011527">
    <property type="entry name" value="ABC1_TM_dom"/>
</dbReference>
<dbReference type="InterPro" id="IPR036640">
    <property type="entry name" value="ABC1_TM_sf"/>
</dbReference>
<dbReference type="InterPro" id="IPR003439">
    <property type="entry name" value="ABC_transporter-like_ATP-bd"/>
</dbReference>
<dbReference type="InterPro" id="IPR017871">
    <property type="entry name" value="ABC_transporter-like_CS"/>
</dbReference>
<dbReference type="InterPro" id="IPR050173">
    <property type="entry name" value="ABC_transporter_C-like"/>
</dbReference>
<dbReference type="InterPro" id="IPR044726">
    <property type="entry name" value="ABCC_6TM_D2"/>
</dbReference>
<dbReference type="InterPro" id="IPR027417">
    <property type="entry name" value="P-loop_NTPase"/>
</dbReference>
<dbReference type="PANTHER" id="PTHR24223">
    <property type="entry name" value="ATP-BINDING CASSETTE SUB-FAMILY C"/>
    <property type="match status" value="1"/>
</dbReference>
<dbReference type="PANTHER" id="PTHR24223:SF443">
    <property type="entry name" value="MULTIDRUG-RESISTANCE LIKE PROTEIN 1, ISOFORM I"/>
    <property type="match status" value="1"/>
</dbReference>
<dbReference type="Pfam" id="PF00664">
    <property type="entry name" value="ABC_membrane"/>
    <property type="match status" value="2"/>
</dbReference>
<dbReference type="Pfam" id="PF00005">
    <property type="entry name" value="ABC_tran"/>
    <property type="match status" value="2"/>
</dbReference>
<dbReference type="SMART" id="SM00382">
    <property type="entry name" value="AAA"/>
    <property type="match status" value="2"/>
</dbReference>
<dbReference type="SUPFAM" id="SSF90123">
    <property type="entry name" value="ABC transporter transmembrane region"/>
    <property type="match status" value="2"/>
</dbReference>
<dbReference type="SUPFAM" id="SSF52540">
    <property type="entry name" value="P-loop containing nucleoside triphosphate hydrolases"/>
    <property type="match status" value="2"/>
</dbReference>
<dbReference type="PROSITE" id="PS50929">
    <property type="entry name" value="ABC_TM1F"/>
    <property type="match status" value="2"/>
</dbReference>
<dbReference type="PROSITE" id="PS00211">
    <property type="entry name" value="ABC_TRANSPORTER_1"/>
    <property type="match status" value="2"/>
</dbReference>
<dbReference type="PROSITE" id="PS50893">
    <property type="entry name" value="ABC_TRANSPORTER_2"/>
    <property type="match status" value="2"/>
</dbReference>
<protein>
    <recommendedName>
        <fullName evidence="10">Vacuolar heme ABC transmembrane exporter abc3</fullName>
    </recommendedName>
</protein>
<comment type="function">
    <text evidence="6 7 8">Iron-regulated vacuolar transporter that mobilizes stored heme from the vacuole to the cytosol in response to iron deficiency.</text>
</comment>
<comment type="subcellular location">
    <subcellularLocation>
        <location evidence="5 6 7 8">Vacuole membrane</location>
        <topology evidence="3 5 6 7 8">Multi-pass membrane protein</topology>
    </subcellularLocation>
</comment>
<comment type="induction">
    <text evidence="7">Induced under conditions of iron deficiency and negatively regulated by iron through fep1.</text>
</comment>
<comment type="similarity">
    <text evidence="9">Belongs to the ABC transporter superfamily.</text>
</comment>
<accession>Q9P5N0</accession>
<accession>Q9UU44</accession>
<keyword id="KW-0067">ATP-binding</keyword>
<keyword id="KW-0349">Heme</keyword>
<keyword id="KW-0408">Iron</keyword>
<keyword id="KW-0472">Membrane</keyword>
<keyword id="KW-0479">Metal-binding</keyword>
<keyword id="KW-0547">Nucleotide-binding</keyword>
<keyword id="KW-1185">Reference proteome</keyword>
<keyword id="KW-0677">Repeat</keyword>
<keyword id="KW-0812">Transmembrane</keyword>
<keyword id="KW-1133">Transmembrane helix</keyword>
<keyword id="KW-0813">Transport</keyword>
<keyword id="KW-0926">Vacuole</keyword>
<feature type="chain" id="PRO_0000093471" description="Vacuolar heme ABC transmembrane exporter abc3">
    <location>
        <begin position="1"/>
        <end position="1465"/>
    </location>
</feature>
<feature type="topological domain" description="Extracellular" evidence="1">
    <location>
        <begin position="1"/>
        <end position="8"/>
    </location>
</feature>
<feature type="transmembrane region" description="Helical" evidence="3">
    <location>
        <begin position="9"/>
        <end position="29"/>
    </location>
</feature>
<feature type="topological domain" description="Cytoplasmic" evidence="1">
    <location>
        <begin position="30"/>
        <end position="42"/>
    </location>
</feature>
<feature type="transmembrane region" description="Helical" evidence="3">
    <location>
        <begin position="43"/>
        <end position="63"/>
    </location>
</feature>
<feature type="topological domain" description="Extracellular" evidence="1">
    <location>
        <begin position="64"/>
        <end position="69"/>
    </location>
</feature>
<feature type="transmembrane region" description="Helical" evidence="3">
    <location>
        <begin position="70"/>
        <end position="90"/>
    </location>
</feature>
<feature type="topological domain" description="Cytoplasmic" evidence="1">
    <location>
        <begin position="91"/>
        <end position="97"/>
    </location>
</feature>
<feature type="transmembrane region" description="Helical" evidence="3">
    <location>
        <begin position="98"/>
        <end position="118"/>
    </location>
</feature>
<feature type="topological domain" description="Extracellular" evidence="1">
    <location>
        <begin position="119"/>
        <end position="129"/>
    </location>
</feature>
<feature type="transmembrane region" description="Helical" evidence="3">
    <location>
        <begin position="130"/>
        <end position="150"/>
    </location>
</feature>
<feature type="topological domain" description="Cytoplasmic" evidence="1">
    <location>
        <begin position="151"/>
        <end position="235"/>
    </location>
</feature>
<feature type="transmembrane region" description="Helical" evidence="3">
    <location>
        <begin position="236"/>
        <end position="256"/>
    </location>
</feature>
<feature type="topological domain" description="Extracellular" evidence="1">
    <location>
        <begin position="257"/>
        <end position="291"/>
    </location>
</feature>
<feature type="transmembrane region" description="Helical" evidence="3">
    <location>
        <begin position="292"/>
        <end position="312"/>
    </location>
</feature>
<feature type="topological domain" description="Cytoplasmic" evidence="1">
    <location>
        <begin position="313"/>
        <end position="362"/>
    </location>
</feature>
<feature type="transmembrane region" description="Helical" evidence="3">
    <location>
        <begin position="363"/>
        <end position="383"/>
    </location>
</feature>
<feature type="topological domain" description="Extracellular" evidence="1">
    <location>
        <begin position="384"/>
        <end position="394"/>
    </location>
</feature>
<feature type="transmembrane region" description="Helical" evidence="3">
    <location>
        <begin position="395"/>
        <end position="415"/>
    </location>
</feature>
<feature type="topological domain" description="Cytoplasmic" evidence="1">
    <location>
        <begin position="416"/>
        <end position="480"/>
    </location>
</feature>
<feature type="transmembrane region" description="Helical" evidence="3">
    <location>
        <begin position="481"/>
        <end position="501"/>
    </location>
</feature>
<feature type="topological domain" description="Extracellular" evidence="1">
    <location>
        <begin position="502"/>
        <end position="511"/>
    </location>
</feature>
<feature type="transmembrane region" description="Helical" evidence="3">
    <location>
        <begin position="512"/>
        <end position="532"/>
    </location>
</feature>
<feature type="topological domain" description="Cytoplasmic" evidence="1">
    <location>
        <begin position="533"/>
        <end position="899"/>
    </location>
</feature>
<feature type="transmembrane region" description="Helical" evidence="3">
    <location>
        <begin position="900"/>
        <end position="920"/>
    </location>
</feature>
<feature type="topological domain" description="Extracellular" evidence="1">
    <location>
        <begin position="921"/>
        <end position="939"/>
    </location>
</feature>
<feature type="transmembrane region" description="Helical" evidence="3">
    <location>
        <begin position="940"/>
        <end position="960"/>
    </location>
</feature>
<feature type="topological domain" description="Cytoplasmic" evidence="1">
    <location>
        <begin position="961"/>
        <end position="1033"/>
    </location>
</feature>
<feature type="transmembrane region" description="Helical" evidence="3">
    <location>
        <begin position="1034"/>
        <end position="1054"/>
    </location>
</feature>
<feature type="topological domain" description="Extracellular" evidence="1">
    <location>
        <begin position="1055"/>
        <end position="1465"/>
    </location>
</feature>
<feature type="domain" description="ABC transmembrane type-1 1" evidence="3">
    <location>
        <begin position="250"/>
        <end position="539"/>
    </location>
</feature>
<feature type="domain" description="ABC transporter 1" evidence="2">
    <location>
        <begin position="575"/>
        <end position="804"/>
    </location>
</feature>
<feature type="domain" description="ABC transmembrane type-1 2" evidence="3">
    <location>
        <begin position="903"/>
        <end position="1189"/>
    </location>
</feature>
<feature type="domain" description="ABC transporter 2" evidence="2">
    <location>
        <begin position="1226"/>
        <end position="1460"/>
    </location>
</feature>
<feature type="region of interest" description="Disordered" evidence="4">
    <location>
        <begin position="805"/>
        <end position="824"/>
    </location>
</feature>
<feature type="region of interest" description="Disordered" evidence="4">
    <location>
        <begin position="840"/>
        <end position="869"/>
    </location>
</feature>
<feature type="binding site" evidence="8">
    <location>
        <begin position="151"/>
        <end position="152"/>
    </location>
    <ligand>
        <name>heme</name>
        <dbReference type="ChEBI" id="CHEBI:30413"/>
    </ligand>
</feature>
<feature type="binding site" evidence="2">
    <location>
        <begin position="614"/>
        <end position="621"/>
    </location>
    <ligand>
        <name>ATP</name>
        <dbReference type="ChEBI" id="CHEBI:30616"/>
        <label>1</label>
    </ligand>
</feature>
<feature type="binding site" evidence="2">
    <location>
        <begin position="1260"/>
        <end position="1267"/>
    </location>
    <ligand>
        <name>ATP</name>
        <dbReference type="ChEBI" id="CHEBI:30616"/>
        <label>2</label>
    </ligand>
</feature>
<feature type="mutagenesis site" description="Abolishes heme binding and heme export from vacuole; when associated with A-152." evidence="8">
    <original>P</original>
    <variation>A</variation>
    <location>
        <position position="151"/>
    </location>
</feature>
<feature type="mutagenesis site" description="Abolishes heme binding and heme export from vacuole; when associated with A-151." evidence="8">
    <original>C</original>
    <variation>A</variation>
    <location>
        <position position="152"/>
    </location>
</feature>
<feature type="sequence conflict" description="In Ref. 2; BAA87125." evidence="9" ref="2">
    <original>L</original>
    <variation>V</variation>
    <location>
        <position position="207"/>
    </location>
</feature>
<gene>
    <name evidence="10" type="primary">abc3</name>
    <name evidence="10" type="ORF">SPBC359.05</name>
</gene>
<evidence type="ECO:0000255" key="1"/>
<evidence type="ECO:0000255" key="2">
    <source>
        <dbReference type="PROSITE-ProRule" id="PRU00434"/>
    </source>
</evidence>
<evidence type="ECO:0000255" key="3">
    <source>
        <dbReference type="PROSITE-ProRule" id="PRU00441"/>
    </source>
</evidence>
<evidence type="ECO:0000256" key="4">
    <source>
        <dbReference type="SAM" id="MobiDB-lite"/>
    </source>
</evidence>
<evidence type="ECO:0000269" key="5">
    <source>
    </source>
</evidence>
<evidence type="ECO:0000269" key="6">
    <source>
    </source>
</evidence>
<evidence type="ECO:0000269" key="7">
    <source>
    </source>
</evidence>
<evidence type="ECO:0000269" key="8">
    <source>
    </source>
</evidence>
<evidence type="ECO:0000305" key="9"/>
<evidence type="ECO:0000312" key="10">
    <source>
        <dbReference type="PomBase" id="SPBC359.05"/>
    </source>
</evidence>
<reference key="1">
    <citation type="journal article" date="2002" name="Nature">
        <title>The genome sequence of Schizosaccharomyces pombe.</title>
        <authorList>
            <person name="Wood V."/>
            <person name="Gwilliam R."/>
            <person name="Rajandream M.A."/>
            <person name="Lyne M.H."/>
            <person name="Lyne R."/>
            <person name="Stewart A."/>
            <person name="Sgouros J.G."/>
            <person name="Peat N."/>
            <person name="Hayles J."/>
            <person name="Baker S.G."/>
            <person name="Basham D."/>
            <person name="Bowman S."/>
            <person name="Brooks K."/>
            <person name="Brown D."/>
            <person name="Brown S."/>
            <person name="Chillingworth T."/>
            <person name="Churcher C.M."/>
            <person name="Collins M."/>
            <person name="Connor R."/>
            <person name="Cronin A."/>
            <person name="Davis P."/>
            <person name="Feltwell T."/>
            <person name="Fraser A."/>
            <person name="Gentles S."/>
            <person name="Goble A."/>
            <person name="Hamlin N."/>
            <person name="Harris D.E."/>
            <person name="Hidalgo J."/>
            <person name="Hodgson G."/>
            <person name="Holroyd S."/>
            <person name="Hornsby T."/>
            <person name="Howarth S."/>
            <person name="Huckle E.J."/>
            <person name="Hunt S."/>
            <person name="Jagels K."/>
            <person name="James K.D."/>
            <person name="Jones L."/>
            <person name="Jones M."/>
            <person name="Leather S."/>
            <person name="McDonald S."/>
            <person name="McLean J."/>
            <person name="Mooney P."/>
            <person name="Moule S."/>
            <person name="Mungall K.L."/>
            <person name="Murphy L.D."/>
            <person name="Niblett D."/>
            <person name="Odell C."/>
            <person name="Oliver K."/>
            <person name="O'Neil S."/>
            <person name="Pearson D."/>
            <person name="Quail M.A."/>
            <person name="Rabbinowitsch E."/>
            <person name="Rutherford K.M."/>
            <person name="Rutter S."/>
            <person name="Saunders D."/>
            <person name="Seeger K."/>
            <person name="Sharp S."/>
            <person name="Skelton J."/>
            <person name="Simmonds M.N."/>
            <person name="Squares R."/>
            <person name="Squares S."/>
            <person name="Stevens K."/>
            <person name="Taylor K."/>
            <person name="Taylor R.G."/>
            <person name="Tivey A."/>
            <person name="Walsh S.V."/>
            <person name="Warren T."/>
            <person name="Whitehead S."/>
            <person name="Woodward J.R."/>
            <person name="Volckaert G."/>
            <person name="Aert R."/>
            <person name="Robben J."/>
            <person name="Grymonprez B."/>
            <person name="Weltjens I."/>
            <person name="Vanstreels E."/>
            <person name="Rieger M."/>
            <person name="Schaefer M."/>
            <person name="Mueller-Auer S."/>
            <person name="Gabel C."/>
            <person name="Fuchs M."/>
            <person name="Duesterhoeft A."/>
            <person name="Fritzc C."/>
            <person name="Holzer E."/>
            <person name="Moestl D."/>
            <person name="Hilbert H."/>
            <person name="Borzym K."/>
            <person name="Langer I."/>
            <person name="Beck A."/>
            <person name="Lehrach H."/>
            <person name="Reinhardt R."/>
            <person name="Pohl T.M."/>
            <person name="Eger P."/>
            <person name="Zimmermann W."/>
            <person name="Wedler H."/>
            <person name="Wambutt R."/>
            <person name="Purnelle B."/>
            <person name="Goffeau A."/>
            <person name="Cadieu E."/>
            <person name="Dreano S."/>
            <person name="Gloux S."/>
            <person name="Lelaure V."/>
            <person name="Mottier S."/>
            <person name="Galibert F."/>
            <person name="Aves S.J."/>
            <person name="Xiang Z."/>
            <person name="Hunt C."/>
            <person name="Moore K."/>
            <person name="Hurst S.M."/>
            <person name="Lucas M."/>
            <person name="Rochet M."/>
            <person name="Gaillardin C."/>
            <person name="Tallada V.A."/>
            <person name="Garzon A."/>
            <person name="Thode G."/>
            <person name="Daga R.R."/>
            <person name="Cruzado L."/>
            <person name="Jimenez J."/>
            <person name="Sanchez M."/>
            <person name="del Rey F."/>
            <person name="Benito J."/>
            <person name="Dominguez A."/>
            <person name="Revuelta J.L."/>
            <person name="Moreno S."/>
            <person name="Armstrong J."/>
            <person name="Forsburg S.L."/>
            <person name="Cerutti L."/>
            <person name="Lowe T."/>
            <person name="McCombie W.R."/>
            <person name="Paulsen I."/>
            <person name="Potashkin J."/>
            <person name="Shpakovski G.V."/>
            <person name="Ussery D."/>
            <person name="Barrell B.G."/>
            <person name="Nurse P."/>
        </authorList>
    </citation>
    <scope>NUCLEOTIDE SEQUENCE [LARGE SCALE GENOMIC DNA]</scope>
    <source>
        <strain>972 / ATCC 24843</strain>
    </source>
</reference>
<reference key="2">
    <citation type="journal article" date="2000" name="Genes Cells">
        <title>Large-scale screening of intracellular protein localization in living fission yeast cells by the use of a GFP-fusion genomic DNA library.</title>
        <authorList>
            <person name="Ding D.-Q."/>
            <person name="Tomita Y."/>
            <person name="Yamamoto A."/>
            <person name="Chikashige Y."/>
            <person name="Haraguchi T."/>
            <person name="Hiraoka Y."/>
        </authorList>
    </citation>
    <scope>NUCLEOTIDE SEQUENCE [LARGE SCALE GENOMIC DNA] OF 207-348</scope>
    <scope>SUBCELLULAR LOCATION</scope>
    <source>
        <strain>ATCC 38364 / 968</strain>
    </source>
</reference>
<reference key="3">
    <citation type="journal article" date="2006" name="Microbiology">
        <title>A survey of all 11 ABC transporters in fission yeast: two novel ABC transporters are required for red pigment accumulation in a Schizosaccharomyces pombe adenine biosynthetic mutant.</title>
        <authorList>
            <person name="Iwaki T."/>
            <person name="Giga-Hama Y."/>
            <person name="Takegawa K."/>
        </authorList>
    </citation>
    <scope>SUBCELLULAR LOCATION</scope>
    <scope>FUNCTION</scope>
</reference>
<reference key="4">
    <citation type="journal article" date="2010" name="Eukaryot. Cell">
        <title>abc3+ encodes an iron-regulated vacuolar ABC-type transporter in Schizosaccharomyces pombe.</title>
        <authorList>
            <person name="Pouliot B."/>
            <person name="Jbel M."/>
            <person name="Mercier A."/>
            <person name="Labbe S."/>
        </authorList>
    </citation>
    <scope>FUNCTION</scope>
    <scope>INDUCTION</scope>
    <scope>SUBCELLULAR LOCATION</scope>
</reference>
<reference key="5">
    <citation type="journal article" date="2017" name="J. Biol. Chem.">
        <title>Heme Assimilation in Schizosaccharomyces pombe Requires Cell-surface-anchored Protein Shu1 and Vacuolar Transporter Abc3.</title>
        <authorList>
            <person name="Mourer T."/>
            <person name="Normant V."/>
            <person name="Labbe S."/>
        </authorList>
    </citation>
    <scope>FUNCTION</scope>
    <scope>SUBCELLULAR LOCATION</scope>
    <scope>MUTAGENESIS OF PRO-151 AND CYS-152</scope>
</reference>
<organism>
    <name type="scientific">Schizosaccharomyces pombe (strain 972 / ATCC 24843)</name>
    <name type="common">Fission yeast</name>
    <dbReference type="NCBI Taxonomy" id="284812"/>
    <lineage>
        <taxon>Eukaryota</taxon>
        <taxon>Fungi</taxon>
        <taxon>Dikarya</taxon>
        <taxon>Ascomycota</taxon>
        <taxon>Taphrinomycotina</taxon>
        <taxon>Schizosaccharomycetes</taxon>
        <taxon>Schizosaccharomycetales</taxon>
        <taxon>Schizosaccharomycetaceae</taxon>
        <taxon>Schizosaccharomyces</taxon>
    </lineage>
</organism>
<proteinExistence type="evidence at protein level"/>
<sequence length="1465" mass="166613">MITANKGLSLVLLIPNLFALVSGGLQYVFDVRRRIFRPHFSQFWTIWMKFFSIALVIITQIYVGYKTKNIGWNFFSVVTYCFVLFLQFAEQSTLRVPMASLLIFWLLKVVTSLLILLFSPYIAITSMARLLTLITLFCSLVCFISEVYVPPCNRVWYSDDTNEVEEKGIRPSEVRYANIFSKLSFSWISSFIKFGYTNYLKESDVWLLPPDERSGNLIIGFEDWWIYHSKNKRRSLFLWKLLFFNHWKLVALITITKLIQDVLAFVQPTLIQKTILFISSYTSPNPESPSRGFIIAILVLVANFLQTLLLQQYNQLIMLLGMRWKTELLASIYRKSLLLSSSARQNRSIGDIINYMAVDTQKISDLPIYLFIIVSGPFQIALALSNLYHLMGYSAFTGVAASVILFPCNIIVANVYKKFQSILMKNKDSRSKLMTEIINNIRSIKLYAWETPFLQKLLHIRNTKELSMLKKIGFITAIGDFAWIFTTIIVTTVAFGAFIIFHGKTQALTADIVFPAVSLFNLLQFPLAMLPTVISSLLEASVSVSRIYEFLIAQELDYNGVQRFPATEIPHEICLEIKSGTFSWSKKTLKQQVTPTLRQINFVAKNGELTCIFGKVGAGKSSLLEACMGNMYKNSGSVFQCGSLAYAAQQPWIFDATIRENILFGSEFDPELYEKTIHACCLKRDFEIFTEGDQTEVGQKGASLSGGQKSRISLARAIYSQADIYLLDDVLSSVDQHVSRDLIKNLFGPEGFLRTHCVVLTTNSLNVLKEADSIYILSNGKIVEKGNYEHLFVSTNSELKQQLSEFNDEKDTQPLPEHTTSYPSTQISLAPSIHVEGLETYSSSERKDSSNKYKSRKRNPIRQKVTEDDKGKCVAQTDELVQRGKVKWHVYWMYFKSCSIGLILLYFFFIISGIMMNVATNVWLKHWSEENGKSSSELNPSPYFYLGIYLFFGFLSCAFISSSSLTMTVLCGIRSGRYLHDSMLKTILRAPMGFFETTSSGRILNRFSNDVYKVDEVVSLTFMFFFRNSIQVLFILGVICYSAPLSLLLIVPLFFLYLYNRAYYVRTSRELKRLDNVTRSPLYAHVQESLSGLSTIRAYGMQETFVEENDLRIDTNHRVWFMFFSSSRWQAIRVECIGDLIIFCTAFYGILSAIKGSPNPGLVGFSLSYAIQITQGLSFIVQQSVDAENNTVSVERILEYINVKSEAPEIIPENRPPCEWPTDGAVSFNHYSAKYREDLSFALNNINIEISPREKIGIVGRTGAGKSTLAMALFRIIEPTEGKIEIDNEDITKFGLYDLRSRLSIIPQESQIFEGNIRENLDPNHRLTDKKIWEVLEIASLKNCISQLEDGLYSRVAEGGANFSSGQRQLICLARVLLTSTRILLLDEATASVHAETDAIVQQTIRKRFKDRTILTVAHRINTVMDSDRILVLDHGKVVEFDATKKLLENKDSMFYSLAKESGLI</sequence>
<name>ABC3_SCHPO</name>